<protein>
    <recommendedName>
        <fullName evidence="1">Large ribosomal subunit protein uL14</fullName>
    </recommendedName>
    <alternativeName>
        <fullName evidence="2">50S ribosomal protein L14</fullName>
    </alternativeName>
</protein>
<dbReference type="EMBL" id="CP000580">
    <property type="protein sequence ID" value="ABN96862.1"/>
    <property type="molecule type" value="Genomic_DNA"/>
</dbReference>
<dbReference type="SMR" id="A3PVD5"/>
<dbReference type="KEGG" id="mjl:Mjls_1054"/>
<dbReference type="HOGENOM" id="CLU_095071_2_1_11"/>
<dbReference type="BioCyc" id="MSP164757:G1G8C-1067-MONOMER"/>
<dbReference type="GO" id="GO:0022625">
    <property type="term" value="C:cytosolic large ribosomal subunit"/>
    <property type="evidence" value="ECO:0007669"/>
    <property type="project" value="TreeGrafter"/>
</dbReference>
<dbReference type="GO" id="GO:0070180">
    <property type="term" value="F:large ribosomal subunit rRNA binding"/>
    <property type="evidence" value="ECO:0007669"/>
    <property type="project" value="TreeGrafter"/>
</dbReference>
<dbReference type="GO" id="GO:0003735">
    <property type="term" value="F:structural constituent of ribosome"/>
    <property type="evidence" value="ECO:0007669"/>
    <property type="project" value="InterPro"/>
</dbReference>
<dbReference type="GO" id="GO:0006412">
    <property type="term" value="P:translation"/>
    <property type="evidence" value="ECO:0007669"/>
    <property type="project" value="UniProtKB-UniRule"/>
</dbReference>
<dbReference type="CDD" id="cd00337">
    <property type="entry name" value="Ribosomal_uL14"/>
    <property type="match status" value="1"/>
</dbReference>
<dbReference type="FunFam" id="2.40.150.20:FF:000001">
    <property type="entry name" value="50S ribosomal protein L14"/>
    <property type="match status" value="1"/>
</dbReference>
<dbReference type="Gene3D" id="2.40.150.20">
    <property type="entry name" value="Ribosomal protein L14"/>
    <property type="match status" value="1"/>
</dbReference>
<dbReference type="HAMAP" id="MF_01367">
    <property type="entry name" value="Ribosomal_uL14"/>
    <property type="match status" value="1"/>
</dbReference>
<dbReference type="InterPro" id="IPR000218">
    <property type="entry name" value="Ribosomal_uL14"/>
</dbReference>
<dbReference type="InterPro" id="IPR005745">
    <property type="entry name" value="Ribosomal_uL14_bac-type"/>
</dbReference>
<dbReference type="InterPro" id="IPR019972">
    <property type="entry name" value="Ribosomal_uL14_CS"/>
</dbReference>
<dbReference type="InterPro" id="IPR036853">
    <property type="entry name" value="Ribosomal_uL14_sf"/>
</dbReference>
<dbReference type="NCBIfam" id="TIGR01067">
    <property type="entry name" value="rplN_bact"/>
    <property type="match status" value="1"/>
</dbReference>
<dbReference type="PANTHER" id="PTHR11761">
    <property type="entry name" value="50S/60S RIBOSOMAL PROTEIN L14/L23"/>
    <property type="match status" value="1"/>
</dbReference>
<dbReference type="PANTHER" id="PTHR11761:SF3">
    <property type="entry name" value="LARGE RIBOSOMAL SUBUNIT PROTEIN UL14M"/>
    <property type="match status" value="1"/>
</dbReference>
<dbReference type="Pfam" id="PF00238">
    <property type="entry name" value="Ribosomal_L14"/>
    <property type="match status" value="1"/>
</dbReference>
<dbReference type="SMART" id="SM01374">
    <property type="entry name" value="Ribosomal_L14"/>
    <property type="match status" value="1"/>
</dbReference>
<dbReference type="SUPFAM" id="SSF50193">
    <property type="entry name" value="Ribosomal protein L14"/>
    <property type="match status" value="1"/>
</dbReference>
<dbReference type="PROSITE" id="PS00049">
    <property type="entry name" value="RIBOSOMAL_L14"/>
    <property type="match status" value="1"/>
</dbReference>
<proteinExistence type="inferred from homology"/>
<organism>
    <name type="scientific">Mycobacterium sp. (strain JLS)</name>
    <dbReference type="NCBI Taxonomy" id="164757"/>
    <lineage>
        <taxon>Bacteria</taxon>
        <taxon>Bacillati</taxon>
        <taxon>Actinomycetota</taxon>
        <taxon>Actinomycetes</taxon>
        <taxon>Mycobacteriales</taxon>
        <taxon>Mycobacteriaceae</taxon>
        <taxon>Mycobacterium</taxon>
    </lineage>
</organism>
<feature type="chain" id="PRO_1000055642" description="Large ribosomal subunit protein uL14">
    <location>
        <begin position="1"/>
        <end position="122"/>
    </location>
</feature>
<evidence type="ECO:0000255" key="1">
    <source>
        <dbReference type="HAMAP-Rule" id="MF_01367"/>
    </source>
</evidence>
<evidence type="ECO:0000305" key="2"/>
<sequence length="122" mass="13433">MIQQESRLKVADNTGAKEILCIRVLGGSSRRYAGIGDVIVATVKEAIPGANVKRGDVVKAVVVRTVKERRRADGSYIKFDENAAVIIKNDNDPRGTRIFGPVGRELREKRFMKIVSLAPEVL</sequence>
<keyword id="KW-0687">Ribonucleoprotein</keyword>
<keyword id="KW-0689">Ribosomal protein</keyword>
<keyword id="KW-0694">RNA-binding</keyword>
<keyword id="KW-0699">rRNA-binding</keyword>
<accession>A3PVD5</accession>
<gene>
    <name evidence="1" type="primary">rplN</name>
    <name type="ordered locus">Mjls_1054</name>
</gene>
<reference key="1">
    <citation type="submission" date="2007-02" db="EMBL/GenBank/DDBJ databases">
        <title>Complete sequence of Mycobacterium sp. JLS.</title>
        <authorList>
            <consortium name="US DOE Joint Genome Institute"/>
            <person name="Copeland A."/>
            <person name="Lucas S."/>
            <person name="Lapidus A."/>
            <person name="Barry K."/>
            <person name="Detter J.C."/>
            <person name="Glavina del Rio T."/>
            <person name="Hammon N."/>
            <person name="Israni S."/>
            <person name="Dalin E."/>
            <person name="Tice H."/>
            <person name="Pitluck S."/>
            <person name="Chain P."/>
            <person name="Malfatti S."/>
            <person name="Shin M."/>
            <person name="Vergez L."/>
            <person name="Schmutz J."/>
            <person name="Larimer F."/>
            <person name="Land M."/>
            <person name="Hauser L."/>
            <person name="Kyrpides N."/>
            <person name="Mikhailova N."/>
            <person name="Miller C.D."/>
            <person name="Anderson A.J."/>
            <person name="Sims R.C."/>
            <person name="Richardson P."/>
        </authorList>
    </citation>
    <scope>NUCLEOTIDE SEQUENCE [LARGE SCALE GENOMIC DNA]</scope>
    <source>
        <strain>JLS</strain>
    </source>
</reference>
<name>RL14_MYCSJ</name>
<comment type="function">
    <text evidence="1">Binds to 23S rRNA. Forms part of two intersubunit bridges in the 70S ribosome.</text>
</comment>
<comment type="subunit">
    <text evidence="1">Part of the 50S ribosomal subunit. Forms a cluster with proteins L3 and L19. In the 70S ribosome, L14 and L19 interact and together make contacts with the 16S rRNA in bridges B5 and B8.</text>
</comment>
<comment type="similarity">
    <text evidence="1">Belongs to the universal ribosomal protein uL14 family.</text>
</comment>